<feature type="chain" id="PRO_1000080907" description="NAD(P)H-quinone oxidoreductase subunit 2">
    <location>
        <begin position="1"/>
        <end position="525"/>
    </location>
</feature>
<feature type="transmembrane region" description="Helical" evidence="1">
    <location>
        <begin position="14"/>
        <end position="34"/>
    </location>
</feature>
<feature type="transmembrane region" description="Helical" evidence="1">
    <location>
        <begin position="42"/>
        <end position="62"/>
    </location>
</feature>
<feature type="transmembrane region" description="Helical" evidence="1">
    <location>
        <begin position="78"/>
        <end position="98"/>
    </location>
</feature>
<feature type="transmembrane region" description="Helical" evidence="1">
    <location>
        <begin position="117"/>
        <end position="137"/>
    </location>
</feature>
<feature type="transmembrane region" description="Helical" evidence="1">
    <location>
        <begin position="167"/>
        <end position="187"/>
    </location>
</feature>
<feature type="transmembrane region" description="Helical" evidence="1">
    <location>
        <begin position="201"/>
        <end position="221"/>
    </location>
</feature>
<feature type="transmembrane region" description="Helical" evidence="1">
    <location>
        <begin position="240"/>
        <end position="260"/>
    </location>
</feature>
<feature type="transmembrane region" description="Helical" evidence="1">
    <location>
        <begin position="276"/>
        <end position="296"/>
    </location>
</feature>
<feature type="transmembrane region" description="Helical" evidence="1">
    <location>
        <begin position="302"/>
        <end position="322"/>
    </location>
</feature>
<feature type="transmembrane region" description="Helical" evidence="1">
    <location>
        <begin position="330"/>
        <end position="350"/>
    </location>
</feature>
<feature type="transmembrane region" description="Helical" evidence="1">
    <location>
        <begin position="374"/>
        <end position="394"/>
    </location>
</feature>
<feature type="transmembrane region" description="Helical" evidence="1">
    <location>
        <begin position="396"/>
        <end position="416"/>
    </location>
</feature>
<feature type="transmembrane region" description="Helical" evidence="1">
    <location>
        <begin position="462"/>
        <end position="482"/>
    </location>
</feature>
<feature type="transmembrane region" description="Helical" evidence="1">
    <location>
        <begin position="494"/>
        <end position="514"/>
    </location>
</feature>
<dbReference type="EC" id="7.1.1.-" evidence="1"/>
<dbReference type="EMBL" id="CP000239">
    <property type="protein sequence ID" value="ABC99651.1"/>
    <property type="molecule type" value="Genomic_DNA"/>
</dbReference>
<dbReference type="RefSeq" id="WP_011430329.1">
    <property type="nucleotide sequence ID" value="NC_007775.1"/>
</dbReference>
<dbReference type="SMR" id="Q2JUG6"/>
<dbReference type="STRING" id="321327.CYA_1484"/>
<dbReference type="KEGG" id="cya:CYA_1484"/>
<dbReference type="eggNOG" id="COG1007">
    <property type="taxonomic scope" value="Bacteria"/>
</dbReference>
<dbReference type="HOGENOM" id="CLU_007100_1_3_3"/>
<dbReference type="OrthoDB" id="9811718at2"/>
<dbReference type="Proteomes" id="UP000008818">
    <property type="component" value="Chromosome"/>
</dbReference>
<dbReference type="GO" id="GO:0031676">
    <property type="term" value="C:plasma membrane-derived thylakoid membrane"/>
    <property type="evidence" value="ECO:0007669"/>
    <property type="project" value="UniProtKB-SubCell"/>
</dbReference>
<dbReference type="GO" id="GO:0008137">
    <property type="term" value="F:NADH dehydrogenase (ubiquinone) activity"/>
    <property type="evidence" value="ECO:0007669"/>
    <property type="project" value="InterPro"/>
</dbReference>
<dbReference type="GO" id="GO:0048038">
    <property type="term" value="F:quinone binding"/>
    <property type="evidence" value="ECO:0007669"/>
    <property type="project" value="UniProtKB-KW"/>
</dbReference>
<dbReference type="GO" id="GO:0042773">
    <property type="term" value="P:ATP synthesis coupled electron transport"/>
    <property type="evidence" value="ECO:0007669"/>
    <property type="project" value="InterPro"/>
</dbReference>
<dbReference type="GO" id="GO:0019684">
    <property type="term" value="P:photosynthesis, light reaction"/>
    <property type="evidence" value="ECO:0007669"/>
    <property type="project" value="UniProtKB-UniRule"/>
</dbReference>
<dbReference type="HAMAP" id="MF_00445">
    <property type="entry name" value="NDH1_NuoN_1"/>
    <property type="match status" value="1"/>
</dbReference>
<dbReference type="InterPro" id="IPR010096">
    <property type="entry name" value="NADH-Q_OxRdtase_suN/2"/>
</dbReference>
<dbReference type="InterPro" id="IPR001750">
    <property type="entry name" value="ND/Mrp_TM"/>
</dbReference>
<dbReference type="NCBIfam" id="TIGR01770">
    <property type="entry name" value="NDH_I_N"/>
    <property type="match status" value="1"/>
</dbReference>
<dbReference type="NCBIfam" id="NF002701">
    <property type="entry name" value="PRK02504.1"/>
    <property type="match status" value="1"/>
</dbReference>
<dbReference type="PANTHER" id="PTHR22773">
    <property type="entry name" value="NADH DEHYDROGENASE"/>
    <property type="match status" value="1"/>
</dbReference>
<dbReference type="Pfam" id="PF00361">
    <property type="entry name" value="Proton_antipo_M"/>
    <property type="match status" value="1"/>
</dbReference>
<dbReference type="PRINTS" id="PR01434">
    <property type="entry name" value="NADHDHGNASE5"/>
</dbReference>
<organism>
    <name type="scientific">Synechococcus sp. (strain JA-3-3Ab)</name>
    <name type="common">Cyanobacteria bacterium Yellowstone A-Prime</name>
    <dbReference type="NCBI Taxonomy" id="321327"/>
    <lineage>
        <taxon>Bacteria</taxon>
        <taxon>Bacillati</taxon>
        <taxon>Cyanobacteriota</taxon>
        <taxon>Cyanophyceae</taxon>
        <taxon>Synechococcales</taxon>
        <taxon>Synechococcaceae</taxon>
        <taxon>Synechococcus</taxon>
    </lineage>
</organism>
<accession>Q2JUG6</accession>
<evidence type="ECO:0000255" key="1">
    <source>
        <dbReference type="HAMAP-Rule" id="MF_00445"/>
    </source>
</evidence>
<reference key="1">
    <citation type="journal article" date="2007" name="ISME J.">
        <title>Population level functional diversity in a microbial community revealed by comparative genomic and metagenomic analyses.</title>
        <authorList>
            <person name="Bhaya D."/>
            <person name="Grossman A.R."/>
            <person name="Steunou A.-S."/>
            <person name="Khuri N."/>
            <person name="Cohan F.M."/>
            <person name="Hamamura N."/>
            <person name="Melendrez M.C."/>
            <person name="Bateson M.M."/>
            <person name="Ward D.M."/>
            <person name="Heidelberg J.F."/>
        </authorList>
    </citation>
    <scope>NUCLEOTIDE SEQUENCE [LARGE SCALE GENOMIC DNA]</scope>
    <source>
        <strain>JA-3-3Ab</strain>
    </source>
</reference>
<gene>
    <name evidence="1" type="primary">ndhB</name>
    <name type="ordered locus">CYA_1484</name>
</gene>
<name>NU2C_SYNJA</name>
<comment type="function">
    <text evidence="1">NDH-1 shuttles electrons from an unknown electron donor, via FMN and iron-sulfur (Fe-S) centers, to quinones in the respiratory and/or the photosynthetic chain. The immediate electron acceptor for the enzyme in this species is believed to be plastoquinone. Couples the redox reaction to proton translocation, and thus conserves the redox energy in a proton gradient. Cyanobacterial NDH-1 also plays a role in inorganic carbon-concentration.</text>
</comment>
<comment type="catalytic activity">
    <reaction evidence="1">
        <text>a plastoquinone + NADH + (n+1) H(+)(in) = a plastoquinol + NAD(+) + n H(+)(out)</text>
        <dbReference type="Rhea" id="RHEA:42608"/>
        <dbReference type="Rhea" id="RHEA-COMP:9561"/>
        <dbReference type="Rhea" id="RHEA-COMP:9562"/>
        <dbReference type="ChEBI" id="CHEBI:15378"/>
        <dbReference type="ChEBI" id="CHEBI:17757"/>
        <dbReference type="ChEBI" id="CHEBI:57540"/>
        <dbReference type="ChEBI" id="CHEBI:57945"/>
        <dbReference type="ChEBI" id="CHEBI:62192"/>
    </reaction>
</comment>
<comment type="catalytic activity">
    <reaction evidence="1">
        <text>a plastoquinone + NADPH + (n+1) H(+)(in) = a plastoquinol + NADP(+) + n H(+)(out)</text>
        <dbReference type="Rhea" id="RHEA:42612"/>
        <dbReference type="Rhea" id="RHEA-COMP:9561"/>
        <dbReference type="Rhea" id="RHEA-COMP:9562"/>
        <dbReference type="ChEBI" id="CHEBI:15378"/>
        <dbReference type="ChEBI" id="CHEBI:17757"/>
        <dbReference type="ChEBI" id="CHEBI:57783"/>
        <dbReference type="ChEBI" id="CHEBI:58349"/>
        <dbReference type="ChEBI" id="CHEBI:62192"/>
    </reaction>
</comment>
<comment type="subunit">
    <text evidence="1">NDH-1 can be composed of about 15 different subunits; different subcomplexes with different compositions have been identified which probably have different functions.</text>
</comment>
<comment type="subcellular location">
    <subcellularLocation>
        <location evidence="1">Cellular thylakoid membrane</location>
        <topology evidence="1">Multi-pass membrane protein</topology>
    </subcellularLocation>
</comment>
<comment type="similarity">
    <text evidence="1">Belongs to the complex I subunit 2 family.</text>
</comment>
<sequence>MDVFAPTGNLHAGAIWPEVVVTLTLLIVLVVDLVGGSAARKSLPALSLFGLLGALVTLVLQWQQPQLESFLGSFAADPVSILFRGLVVATAALTVMMAERYFLQAGAPTGEFYVLLLTATLGGMFLAGATDLIMVFVSLETLGIASYLMAGYTKRDPRSSEAALKYLLTGASSTAIFLYGMSLLYGLSGGQTQLAAIAPYLANAGLVGILALVFCLGGIGFKLAAVPFHQWTPDVYEGSPTPVVAFLSVGSKAAGFALAIRFLATVFPAMTEEWRAVLSVLAILTMVLGNVVAIAQTRLKRLLAYSSIGQAGFVLIGLVAGTEAGYASLIFYLMVYLAMNLGAFLCVTLFSLKTGTDEINEYSGLYQKDPFLTLCLSICLLSLGGLPPLAGFFGKLYLFWAGWQAGEYTLVLVGLVTSVISIYYYVRVVKTMVVKEPQEMSLSVQNYPPTDWQAEGMPALRVGMVVTLVATIFAGILSNPLFTLSTQAVEQSPFLGFPTAQAFAPGSASPSLAVAGSAALPSRGS</sequence>
<keyword id="KW-0472">Membrane</keyword>
<keyword id="KW-0520">NAD</keyword>
<keyword id="KW-0521">NADP</keyword>
<keyword id="KW-0618">Plastoquinone</keyword>
<keyword id="KW-0874">Quinone</keyword>
<keyword id="KW-0793">Thylakoid</keyword>
<keyword id="KW-1278">Translocase</keyword>
<keyword id="KW-0812">Transmembrane</keyword>
<keyword id="KW-1133">Transmembrane helix</keyword>
<keyword id="KW-0813">Transport</keyword>
<protein>
    <recommendedName>
        <fullName evidence="1">NAD(P)H-quinone oxidoreductase subunit 2</fullName>
        <ecNumber evidence="1">7.1.1.-</ecNumber>
    </recommendedName>
    <alternativeName>
        <fullName evidence="1">NAD(P)H dehydrogenase subunit 2</fullName>
    </alternativeName>
    <alternativeName>
        <fullName evidence="1">NADH-plastoquinone oxidoreductase subunit 2</fullName>
    </alternativeName>
    <alternativeName>
        <fullName evidence="1">NDH-1, subunit 2</fullName>
    </alternativeName>
</protein>
<proteinExistence type="inferred from homology"/>